<feature type="chain" id="PRO_0000344638" description="Large ribosomal subunit protein bL36B">
    <location>
        <begin position="1"/>
        <end position="37"/>
    </location>
</feature>
<gene>
    <name evidence="1" type="primary">rpmJ2</name>
    <name type="ordered locus">ASA_4066</name>
</gene>
<accession>A4SSY5</accession>
<protein>
    <recommendedName>
        <fullName evidence="1">Large ribosomal subunit protein bL36B</fullName>
    </recommendedName>
    <alternativeName>
        <fullName evidence="2">50S ribosomal protein L36 2</fullName>
    </alternativeName>
</protein>
<keyword id="KW-0687">Ribonucleoprotein</keyword>
<keyword id="KW-0689">Ribosomal protein</keyword>
<sequence>MKVRASVKAICRNCKIIKRHGVVRVICSEPKHKQRQG</sequence>
<reference key="1">
    <citation type="journal article" date="2008" name="BMC Genomics">
        <title>The genome of Aeromonas salmonicida subsp. salmonicida A449: insights into the evolution of a fish pathogen.</title>
        <authorList>
            <person name="Reith M.E."/>
            <person name="Singh R.K."/>
            <person name="Curtis B."/>
            <person name="Boyd J.M."/>
            <person name="Bouevitch A."/>
            <person name="Kimball J."/>
            <person name="Munholland J."/>
            <person name="Murphy C."/>
            <person name="Sarty D."/>
            <person name="Williams J."/>
            <person name="Nash J.H."/>
            <person name="Johnson S.C."/>
            <person name="Brown L.L."/>
        </authorList>
    </citation>
    <scope>NUCLEOTIDE SEQUENCE [LARGE SCALE GENOMIC DNA]</scope>
    <source>
        <strain>A449</strain>
    </source>
</reference>
<dbReference type="EMBL" id="CP000644">
    <property type="protein sequence ID" value="ABO92007.1"/>
    <property type="molecule type" value="Genomic_DNA"/>
</dbReference>
<dbReference type="SMR" id="A4SSY5"/>
<dbReference type="KEGG" id="asa:ASA_4066"/>
<dbReference type="eggNOG" id="COG0257">
    <property type="taxonomic scope" value="Bacteria"/>
</dbReference>
<dbReference type="HOGENOM" id="CLU_135723_6_2_6"/>
<dbReference type="Proteomes" id="UP000000225">
    <property type="component" value="Chromosome"/>
</dbReference>
<dbReference type="GO" id="GO:0005737">
    <property type="term" value="C:cytoplasm"/>
    <property type="evidence" value="ECO:0007669"/>
    <property type="project" value="UniProtKB-ARBA"/>
</dbReference>
<dbReference type="GO" id="GO:1990904">
    <property type="term" value="C:ribonucleoprotein complex"/>
    <property type="evidence" value="ECO:0007669"/>
    <property type="project" value="UniProtKB-KW"/>
</dbReference>
<dbReference type="GO" id="GO:0005840">
    <property type="term" value="C:ribosome"/>
    <property type="evidence" value="ECO:0007669"/>
    <property type="project" value="UniProtKB-KW"/>
</dbReference>
<dbReference type="GO" id="GO:0003735">
    <property type="term" value="F:structural constituent of ribosome"/>
    <property type="evidence" value="ECO:0007669"/>
    <property type="project" value="InterPro"/>
</dbReference>
<dbReference type="GO" id="GO:0006412">
    <property type="term" value="P:translation"/>
    <property type="evidence" value="ECO:0007669"/>
    <property type="project" value="UniProtKB-UniRule"/>
</dbReference>
<dbReference type="HAMAP" id="MF_00251">
    <property type="entry name" value="Ribosomal_bL36"/>
    <property type="match status" value="1"/>
</dbReference>
<dbReference type="InterPro" id="IPR000473">
    <property type="entry name" value="Ribosomal_bL36"/>
</dbReference>
<dbReference type="InterPro" id="IPR035977">
    <property type="entry name" value="Ribosomal_bL36_sp"/>
</dbReference>
<dbReference type="NCBIfam" id="TIGR01022">
    <property type="entry name" value="rpmJ_bact"/>
    <property type="match status" value="1"/>
</dbReference>
<dbReference type="PANTHER" id="PTHR42888">
    <property type="entry name" value="50S RIBOSOMAL PROTEIN L36, CHLOROPLASTIC"/>
    <property type="match status" value="1"/>
</dbReference>
<dbReference type="PANTHER" id="PTHR42888:SF1">
    <property type="entry name" value="LARGE RIBOSOMAL SUBUNIT PROTEIN BL36C"/>
    <property type="match status" value="1"/>
</dbReference>
<dbReference type="Pfam" id="PF00444">
    <property type="entry name" value="Ribosomal_L36"/>
    <property type="match status" value="1"/>
</dbReference>
<dbReference type="SUPFAM" id="SSF57840">
    <property type="entry name" value="Ribosomal protein L36"/>
    <property type="match status" value="1"/>
</dbReference>
<dbReference type="PROSITE" id="PS00828">
    <property type="entry name" value="RIBOSOMAL_L36"/>
    <property type="match status" value="1"/>
</dbReference>
<organism>
    <name type="scientific">Aeromonas salmonicida (strain A449)</name>
    <dbReference type="NCBI Taxonomy" id="382245"/>
    <lineage>
        <taxon>Bacteria</taxon>
        <taxon>Pseudomonadati</taxon>
        <taxon>Pseudomonadota</taxon>
        <taxon>Gammaproteobacteria</taxon>
        <taxon>Aeromonadales</taxon>
        <taxon>Aeromonadaceae</taxon>
        <taxon>Aeromonas</taxon>
    </lineage>
</organism>
<evidence type="ECO:0000255" key="1">
    <source>
        <dbReference type="HAMAP-Rule" id="MF_00251"/>
    </source>
</evidence>
<evidence type="ECO:0000305" key="2"/>
<proteinExistence type="inferred from homology"/>
<name>RL362_AERS4</name>
<comment type="similarity">
    <text evidence="1">Belongs to the bacterial ribosomal protein bL36 family.</text>
</comment>